<keyword id="KW-0025">Alternative splicing</keyword>
<keyword id="KW-0963">Cytoplasm</keyword>
<keyword id="KW-0206">Cytoskeleton</keyword>
<keyword id="KW-0472">Membrane</keyword>
<keyword id="KW-0597">Phosphoprotein</keyword>
<keyword id="KW-1185">Reference proteome</keyword>
<keyword id="KW-0677">Repeat</keyword>
<keyword id="KW-0853">WD repeat</keyword>
<name>2ABB_MACFA</name>
<organism>
    <name type="scientific">Macaca fascicularis</name>
    <name type="common">Crab-eating macaque</name>
    <name type="synonym">Cynomolgus monkey</name>
    <dbReference type="NCBI Taxonomy" id="9541"/>
    <lineage>
        <taxon>Eukaryota</taxon>
        <taxon>Metazoa</taxon>
        <taxon>Chordata</taxon>
        <taxon>Craniata</taxon>
        <taxon>Vertebrata</taxon>
        <taxon>Euteleostomi</taxon>
        <taxon>Mammalia</taxon>
        <taxon>Eutheria</taxon>
        <taxon>Euarchontoglires</taxon>
        <taxon>Primates</taxon>
        <taxon>Haplorrhini</taxon>
        <taxon>Catarrhini</taxon>
        <taxon>Cercopithecidae</taxon>
        <taxon>Cercopithecinae</taxon>
        <taxon>Macaca</taxon>
    </lineage>
</organism>
<proteinExistence type="evidence at transcript level"/>
<accession>Q4R8L3</accession>
<accession>Q60HB9</accession>
<accession>Q95LX5</accession>
<gene>
    <name type="primary">PPP2R2B</name>
    <name type="ORF">QtrA-17824</name>
    <name type="ORF">QtsA-12205</name>
    <name type="ORF">QtsA-16107</name>
</gene>
<feature type="chain" id="PRO_0000071422" description="Serine/threonine-protein phosphatase 2A 55 kDa regulatory subunit B beta isoform">
    <location>
        <begin position="1"/>
        <end position="443"/>
    </location>
</feature>
<feature type="repeat" description="WD 1">
    <location>
        <begin position="22"/>
        <end position="61"/>
    </location>
</feature>
<feature type="repeat" description="WD 2">
    <location>
        <begin position="87"/>
        <end position="128"/>
    </location>
</feature>
<feature type="repeat" description="WD 3">
    <location>
        <begin position="171"/>
        <end position="209"/>
    </location>
</feature>
<feature type="repeat" description="WD 4">
    <location>
        <begin position="220"/>
        <end position="260"/>
    </location>
</feature>
<feature type="repeat" description="WD 5">
    <location>
        <begin position="279"/>
        <end position="317"/>
    </location>
</feature>
<feature type="repeat" description="WD 6">
    <location>
        <begin position="334"/>
        <end position="375"/>
    </location>
</feature>
<feature type="repeat" description="WD 7">
    <location>
        <begin position="410"/>
        <end position="442"/>
    </location>
</feature>
<feature type="modified residue" description="Phosphoserine" evidence="2">
    <location>
        <position position="275"/>
    </location>
</feature>
<feature type="modified residue" description="Phosphotyrosine" evidence="2">
    <location>
        <position position="295"/>
    </location>
</feature>
<feature type="modified residue" description="Phosphothreonine" evidence="2">
    <location>
        <position position="298"/>
    </location>
</feature>
<feature type="splice variant" id="VSP_037980" description="In isoform 2." evidence="4">
    <original>MEEDIDTRKINNSFLRDHSYATEA</original>
    <variation>MNYPDENTYGNKA</variation>
    <location>
        <begin position="1"/>
        <end position="24"/>
    </location>
</feature>
<feature type="splice variant" id="VSP_037981" description="In isoform 3." evidence="5">
    <original>M</original>
    <variation>MLLSLPALHLQTSEHHPFFQLPHGRLGPWCSPTGSPAPLSCETGCGEGSWILVCRLLVPTQVSLLSM</variation>
    <location>
        <position position="1"/>
    </location>
</feature>
<feature type="sequence conflict" description="In Ref. 2; BAD51996." evidence="6" ref="2">
    <original>D</original>
    <variation>N</variation>
    <location>
        <position position="184"/>
    </location>
</feature>
<feature type="sequence conflict" description="In Ref. 2; BAD51996." evidence="6" ref="2">
    <original>L</original>
    <variation>F</variation>
    <location>
        <position position="325"/>
    </location>
</feature>
<comment type="function">
    <text evidence="1">The B regulatory subunit might modulate substrate selectivity and catalytic activity, and might also direct the localization of the catalytic enzyme to a particular subcellular compartment.</text>
</comment>
<comment type="subunit">
    <text evidence="1 2 3">PP2A consists of a common heterodimeric core enzyme, composed of a 36 kDa catalytic subunit (subunit C) and a 65 kDa constant regulatory subunit (PR65 or subunit A), that associates with a variety of regulatory subunits. Proteins that associate with the core dimer include three families of regulatory subunits B (the R2/B/PR55/B55, R3/B''/PR72/PR130/PR59 and R5/B'/B56 families), the 48 kDa variable regulatory subunit, viral proteins, and cell signaling molecules (By similarity). Interacts with TOMM22 (By similarity). Interacts with IER5 (via N- and C-terminal regions) (By similarity).</text>
</comment>
<comment type="subcellular location">
    <subcellularLocation>
        <location evidence="1">Cytoplasm</location>
    </subcellularLocation>
    <subcellularLocation>
        <location evidence="1">Cytoplasm</location>
        <location evidence="1">Cytoskeleton</location>
    </subcellularLocation>
    <subcellularLocation>
        <location evidence="1">Membrane</location>
    </subcellularLocation>
</comment>
<comment type="alternative products">
    <event type="alternative splicing"/>
    <isoform>
        <id>Q4R8L3-1</id>
        <name>1</name>
        <sequence type="displayed"/>
    </isoform>
    <isoform>
        <id>Q4R8L3-2</id>
        <name>2</name>
        <sequence type="described" ref="VSP_037980"/>
    </isoform>
    <isoform>
        <id>Q4R8L3-3</id>
        <name>3</name>
        <sequence type="described" ref="VSP_037981"/>
    </isoform>
</comment>
<comment type="similarity">
    <text evidence="6">Belongs to the phosphatase 2A regulatory subunit B family.</text>
</comment>
<dbReference type="EMBL" id="AB071066">
    <property type="protein sequence ID" value="BAB64459.1"/>
    <property type="molecule type" value="mRNA"/>
</dbReference>
<dbReference type="EMBL" id="AB125208">
    <property type="protein sequence ID" value="BAD51996.1"/>
    <property type="molecule type" value="mRNA"/>
</dbReference>
<dbReference type="EMBL" id="AB168439">
    <property type="protein sequence ID" value="BAE00559.1"/>
    <property type="molecule type" value="mRNA"/>
</dbReference>
<dbReference type="RefSeq" id="XP_005558205.3">
    <molecule id="Q4R8L3-1"/>
    <property type="nucleotide sequence ID" value="XM_005558148.4"/>
</dbReference>
<dbReference type="RefSeq" id="XP_005558206.1">
    <molecule id="Q4R8L3-3"/>
    <property type="nucleotide sequence ID" value="XM_005558149.4"/>
</dbReference>
<dbReference type="RefSeq" id="XP_005558212.1">
    <property type="nucleotide sequence ID" value="XM_005558155.2"/>
</dbReference>
<dbReference type="RefSeq" id="XP_005558213.1">
    <molecule id="Q4R8L3-1"/>
    <property type="nucleotide sequence ID" value="XM_005558156.4"/>
</dbReference>
<dbReference type="RefSeq" id="XP_005558214.1">
    <property type="nucleotide sequence ID" value="XM_005558157.2"/>
</dbReference>
<dbReference type="RefSeq" id="XP_005558215.1">
    <property type="nucleotide sequence ID" value="XM_005558158.2"/>
</dbReference>
<dbReference type="RefSeq" id="XP_005558216.1">
    <molecule id="Q4R8L3-2"/>
    <property type="nucleotide sequence ID" value="XM_005558159.3"/>
</dbReference>
<dbReference type="RefSeq" id="XP_015307573.1">
    <property type="nucleotide sequence ID" value="XM_015452087.1"/>
</dbReference>
<dbReference type="RefSeq" id="XP_015307574.1">
    <molecule id="Q4R8L3-2"/>
    <property type="nucleotide sequence ID" value="XM_015452088.3"/>
</dbReference>
<dbReference type="RefSeq" id="XP_015307575.1">
    <property type="nucleotide sequence ID" value="XM_015452089.1"/>
</dbReference>
<dbReference type="RefSeq" id="XP_015307576.1">
    <property type="nucleotide sequence ID" value="XM_015452090.1"/>
</dbReference>
<dbReference type="RefSeq" id="XP_015307578.1">
    <property type="nucleotide sequence ID" value="XM_015452092.1"/>
</dbReference>
<dbReference type="RefSeq" id="XP_015307579.1">
    <property type="nucleotide sequence ID" value="XM_015452093.1"/>
</dbReference>
<dbReference type="RefSeq" id="XP_045250939.1">
    <molecule id="Q4R8L3-2"/>
    <property type="nucleotide sequence ID" value="XM_045395004.2"/>
</dbReference>
<dbReference type="RefSeq" id="XP_065402996.1">
    <molecule id="Q4R8L3-1"/>
    <property type="nucleotide sequence ID" value="XM_065546924.1"/>
</dbReference>
<dbReference type="RefSeq" id="XP_065403002.1">
    <molecule id="Q4R8L3-2"/>
    <property type="nucleotide sequence ID" value="XM_065546930.1"/>
</dbReference>
<dbReference type="RefSeq" id="XP_065403003.1">
    <molecule id="Q4R8L3-2"/>
    <property type="nucleotide sequence ID" value="XM_065546931.1"/>
</dbReference>
<dbReference type="SMR" id="Q4R8L3"/>
<dbReference type="STRING" id="9541.ENSMFAP00000006270"/>
<dbReference type="Ensembl" id="ENSMFAT00000024953.2">
    <molecule id="Q4R8L3-1"/>
    <property type="protein sequence ID" value="ENSMFAP00000006269.2"/>
    <property type="gene ID" value="ENSMFAG00000002611.2"/>
</dbReference>
<dbReference type="Ensembl" id="ENSMFAT00000024959.2">
    <molecule id="Q4R8L3-3"/>
    <property type="protein sequence ID" value="ENSMFAP00000006275.2"/>
    <property type="gene ID" value="ENSMFAG00000002611.2"/>
</dbReference>
<dbReference type="GeneID" id="102125257"/>
<dbReference type="KEGG" id="mcf:102125257"/>
<dbReference type="CTD" id="5521"/>
<dbReference type="VEuPathDB" id="HostDB:ENSMFAG00000002611"/>
<dbReference type="eggNOG" id="KOG1354">
    <property type="taxonomic scope" value="Eukaryota"/>
</dbReference>
<dbReference type="GeneTree" id="ENSGT00950000182864"/>
<dbReference type="Proteomes" id="UP000233100">
    <property type="component" value="Chromosome 6"/>
</dbReference>
<dbReference type="Bgee" id="ENSMFAG00000002611">
    <property type="expression patterns" value="Expressed in frontal cortex and 10 other cell types or tissues"/>
</dbReference>
<dbReference type="GO" id="GO:0005737">
    <property type="term" value="C:cytoplasm"/>
    <property type="evidence" value="ECO:0007669"/>
    <property type="project" value="UniProtKB-SubCell"/>
</dbReference>
<dbReference type="GO" id="GO:0005856">
    <property type="term" value="C:cytoskeleton"/>
    <property type="evidence" value="ECO:0007669"/>
    <property type="project" value="UniProtKB-SubCell"/>
</dbReference>
<dbReference type="GO" id="GO:0016020">
    <property type="term" value="C:membrane"/>
    <property type="evidence" value="ECO:0007669"/>
    <property type="project" value="UniProtKB-SubCell"/>
</dbReference>
<dbReference type="GO" id="GO:0000159">
    <property type="term" value="C:protein phosphatase type 2A complex"/>
    <property type="evidence" value="ECO:0007669"/>
    <property type="project" value="InterPro"/>
</dbReference>
<dbReference type="GO" id="GO:0019888">
    <property type="term" value="F:protein phosphatase regulator activity"/>
    <property type="evidence" value="ECO:0007669"/>
    <property type="project" value="InterPro"/>
</dbReference>
<dbReference type="FunFam" id="2.130.10.10:FF:000002">
    <property type="entry name" value="Serine/threonine-protein phosphatase 2A 55 kDa regulatory subunit B"/>
    <property type="match status" value="1"/>
</dbReference>
<dbReference type="Gene3D" id="2.130.10.10">
    <property type="entry name" value="YVTN repeat-like/Quinoprotein amine dehydrogenase"/>
    <property type="match status" value="1"/>
</dbReference>
<dbReference type="InterPro" id="IPR000009">
    <property type="entry name" value="PP2A_PR55"/>
</dbReference>
<dbReference type="InterPro" id="IPR018067">
    <property type="entry name" value="PP2A_PR55_CS"/>
</dbReference>
<dbReference type="InterPro" id="IPR015943">
    <property type="entry name" value="WD40/YVTN_repeat-like_dom_sf"/>
</dbReference>
<dbReference type="InterPro" id="IPR036322">
    <property type="entry name" value="WD40_repeat_dom_sf"/>
</dbReference>
<dbReference type="InterPro" id="IPR001680">
    <property type="entry name" value="WD40_rpt"/>
</dbReference>
<dbReference type="PANTHER" id="PTHR11871">
    <property type="entry name" value="PROTEIN PHOSPHATASE PP2A REGULATORY SUBUNIT B"/>
    <property type="match status" value="1"/>
</dbReference>
<dbReference type="PIRSF" id="PIRSF037309">
    <property type="entry name" value="PP2A_PR55"/>
    <property type="match status" value="1"/>
</dbReference>
<dbReference type="PRINTS" id="PR00600">
    <property type="entry name" value="PP2APR55"/>
</dbReference>
<dbReference type="SMART" id="SM00320">
    <property type="entry name" value="WD40"/>
    <property type="match status" value="6"/>
</dbReference>
<dbReference type="SUPFAM" id="SSF50978">
    <property type="entry name" value="WD40 repeat-like"/>
    <property type="match status" value="1"/>
</dbReference>
<dbReference type="PROSITE" id="PS01024">
    <property type="entry name" value="PR55_1"/>
    <property type="match status" value="1"/>
</dbReference>
<dbReference type="PROSITE" id="PS01025">
    <property type="entry name" value="PR55_2"/>
    <property type="match status" value="1"/>
</dbReference>
<dbReference type="PROSITE" id="PS00678">
    <property type="entry name" value="WD_REPEATS_1"/>
    <property type="match status" value="1"/>
</dbReference>
<reference key="1">
    <citation type="journal article" date="2002" name="BMC Genomics">
        <title>Cynomolgus monkey testicular cDNAs for discovery of novel human genes in the human genome sequence.</title>
        <authorList>
            <person name="Osada N."/>
            <person name="Hida M."/>
            <person name="Kusuda J."/>
            <person name="Tanuma R."/>
            <person name="Hirata M."/>
            <person name="Suto Y."/>
            <person name="Hirai M."/>
            <person name="Terao K."/>
            <person name="Sugano S."/>
            <person name="Hashimoto K."/>
        </authorList>
    </citation>
    <scope>NUCLEOTIDE SEQUENCE [LARGE SCALE MRNA] (ISOFORM 2)</scope>
    <source>
        <tissue>Testis</tissue>
    </source>
</reference>
<reference key="2">
    <citation type="submission" date="2003-10" db="EMBL/GenBank/DDBJ databases">
        <title>Isolation and characterization of cDNA for macaque neurological disease genes.</title>
        <authorList>
            <person name="Kusuda J."/>
            <person name="Osada N."/>
            <person name="Tanuma R."/>
            <person name="Hirata M."/>
            <person name="Sugano S."/>
            <person name="Hashimoto K."/>
        </authorList>
    </citation>
    <scope>NUCLEOTIDE SEQUENCE [LARGE SCALE MRNA] (ISOFORM 3)</scope>
    <source>
        <tissue>Temporal cortex</tissue>
    </source>
</reference>
<reference key="3">
    <citation type="submission" date="2005-06" db="EMBL/GenBank/DDBJ databases">
        <title>DNA sequences of macaque genes expressed in brain or testis and its evolutionary implications.</title>
        <authorList>
            <consortium name="International consortium for macaque cDNA sequencing and analysis"/>
        </authorList>
    </citation>
    <scope>NUCLEOTIDE SEQUENCE [LARGE SCALE MRNA] (ISOFORM 1)</scope>
    <source>
        <tissue>Testis</tissue>
    </source>
</reference>
<evidence type="ECO:0000250" key="1"/>
<evidence type="ECO:0000250" key="2">
    <source>
        <dbReference type="UniProtKB" id="P36877"/>
    </source>
</evidence>
<evidence type="ECO:0000250" key="3">
    <source>
        <dbReference type="UniProtKB" id="Q00005"/>
    </source>
</evidence>
<evidence type="ECO:0000303" key="4">
    <source>
    </source>
</evidence>
<evidence type="ECO:0000303" key="5">
    <source ref="2"/>
</evidence>
<evidence type="ECO:0000305" key="6"/>
<protein>
    <recommendedName>
        <fullName>Serine/threonine-protein phosphatase 2A 55 kDa regulatory subunit B beta isoform</fullName>
    </recommendedName>
    <alternativeName>
        <fullName>PP2A subunit B isoform B55-beta</fullName>
    </alternativeName>
    <alternativeName>
        <fullName>PP2A subunit B isoform PR55-beta</fullName>
    </alternativeName>
    <alternativeName>
        <fullName>PP2A subunit B isoform R2-beta</fullName>
    </alternativeName>
    <alternativeName>
        <fullName>PP2A subunit B isoform beta</fullName>
    </alternativeName>
</protein>
<sequence>MEEDIDTRKINNSFLRDHSYATEADIISTVEFNHTGELLATGDKGGRVVIFQREQESKNQVHRRGEYNVYSTFQSHEPEFDYLKSLEIEEKINKIRWLPQQNAAYFLLSTNDKTVKLWKVSERDKRPEGYNLKDEEGRLRDPATITTLRVPVLRPMDLMVEATPRRVFANAHTYHINSISVNSDYETYMSADDLRINLWNFEITNQSFNIVDIKPANMEELTEVITAAEFHPHHCNTFVYSSSKGTIRLCDMRASALCDRHTKFFEEPEDPSNRSFFSEIISSISDVKFSHSGRYIMTRDYLTVKVWDLNMENRPIETYQVHDYLRSKLCSLYENDCIFDKFECVWNGSDSVIMTGSYNNFFRMFDRNTKRDVTLEASRENSKPRAILKPRKVCVGGKRRKDEISVDSLDFSKKILHTAWHPSENIIAVAATNNLYIFQDKVN</sequence>